<comment type="function">
    <text evidence="1">Catalyzes the condensation of (S)-aspartate-beta-semialdehyde [(S)-ASA] and pyruvate to 4-hydroxy-tetrahydrodipicolinate (HTPA).</text>
</comment>
<comment type="catalytic activity">
    <reaction evidence="1">
        <text>L-aspartate 4-semialdehyde + pyruvate = (2S,4S)-4-hydroxy-2,3,4,5-tetrahydrodipicolinate + H2O + H(+)</text>
        <dbReference type="Rhea" id="RHEA:34171"/>
        <dbReference type="ChEBI" id="CHEBI:15361"/>
        <dbReference type="ChEBI" id="CHEBI:15377"/>
        <dbReference type="ChEBI" id="CHEBI:15378"/>
        <dbReference type="ChEBI" id="CHEBI:67139"/>
        <dbReference type="ChEBI" id="CHEBI:537519"/>
        <dbReference type="EC" id="4.3.3.7"/>
    </reaction>
</comment>
<comment type="pathway">
    <text evidence="1">Amino-acid biosynthesis; L-lysine biosynthesis via DAP pathway; (S)-tetrahydrodipicolinate from L-aspartate: step 3/4.</text>
</comment>
<comment type="subunit">
    <text evidence="1">Homotetramer; dimer of dimers.</text>
</comment>
<comment type="subcellular location">
    <subcellularLocation>
        <location evidence="1">Cytoplasm</location>
    </subcellularLocation>
</comment>
<comment type="similarity">
    <text evidence="1">Belongs to the DapA family.</text>
</comment>
<comment type="caution">
    <text evidence="2">Was originally thought to be a dihydrodipicolinate synthase (DHDPS), catalyzing the condensation of (S)-aspartate-beta-semialdehyde [(S)-ASA] and pyruvate to dihydrodipicolinate (DHDP). However, it was shown in E.coli that the product of the enzymatic reaction is not dihydrodipicolinate but in fact (4S)-4-hydroxy-2,3,4,5-tetrahydro-(2S)-dipicolinic acid (HTPA), and that the consecutive dehydration reaction leading to DHDP is not spontaneous but catalyzed by DapB.</text>
</comment>
<name>DAPA_METTP</name>
<sequence>MFRGVFPAIITPFKDDGSLDEDGLRRNVEVLSKTGISGVVPCGTTGESATLSHEEHKKVVEIVVDCSDVPVVAGTGSNNTSEAIELTRHAADAGADAALLITPYYNRPNERGLFEHFRKVAESSDIPIVLYNVPKRTGVELRPDVVARLSEISNIVAIKEASGSLTQVSRIIELTADKNFAVLSGDDDLTLPMLALGATGVVSVVANVAPRATVEMVNAFLDGNITRAQELHYRLAPLVRAMFLETNPIPVKTAYRMLGMAAGPLRLPLAPMSDENEAKLRDVLTKMSDLTGDMR</sequence>
<accession>A0B7E1</accession>
<keyword id="KW-0028">Amino-acid biosynthesis</keyword>
<keyword id="KW-0963">Cytoplasm</keyword>
<keyword id="KW-0220">Diaminopimelate biosynthesis</keyword>
<keyword id="KW-0456">Lyase</keyword>
<keyword id="KW-0457">Lysine biosynthesis</keyword>
<keyword id="KW-1185">Reference proteome</keyword>
<keyword id="KW-0704">Schiff base</keyword>
<gene>
    <name evidence="1" type="primary">dapA</name>
    <name type="ordered locus">Mthe_0826</name>
</gene>
<organism>
    <name type="scientific">Methanothrix thermoacetophila (strain DSM 6194 / JCM 14653 / NBRC 101360 / PT)</name>
    <name type="common">Methanosaeta thermophila</name>
    <dbReference type="NCBI Taxonomy" id="349307"/>
    <lineage>
        <taxon>Archaea</taxon>
        <taxon>Methanobacteriati</taxon>
        <taxon>Methanobacteriota</taxon>
        <taxon>Stenosarchaea group</taxon>
        <taxon>Methanomicrobia</taxon>
        <taxon>Methanotrichales</taxon>
        <taxon>Methanotrichaceae</taxon>
        <taxon>Methanothrix</taxon>
    </lineage>
</organism>
<dbReference type="EC" id="4.3.3.7" evidence="1"/>
<dbReference type="EMBL" id="CP000477">
    <property type="protein sequence ID" value="ABK14615.1"/>
    <property type="molecule type" value="Genomic_DNA"/>
</dbReference>
<dbReference type="RefSeq" id="WP_011696011.1">
    <property type="nucleotide sequence ID" value="NC_008553.1"/>
</dbReference>
<dbReference type="SMR" id="A0B7E1"/>
<dbReference type="STRING" id="349307.Mthe_0826"/>
<dbReference type="GeneID" id="4462969"/>
<dbReference type="KEGG" id="mtp:Mthe_0826"/>
<dbReference type="HOGENOM" id="CLU_049343_7_1_2"/>
<dbReference type="OrthoDB" id="33636at2157"/>
<dbReference type="UniPathway" id="UPA00034">
    <property type="reaction ID" value="UER00017"/>
</dbReference>
<dbReference type="Proteomes" id="UP000000674">
    <property type="component" value="Chromosome"/>
</dbReference>
<dbReference type="GO" id="GO:0005737">
    <property type="term" value="C:cytoplasm"/>
    <property type="evidence" value="ECO:0007669"/>
    <property type="project" value="UniProtKB-SubCell"/>
</dbReference>
<dbReference type="GO" id="GO:0008675">
    <property type="term" value="F:2-dehydro-3-deoxy-phosphogluconate aldolase activity"/>
    <property type="evidence" value="ECO:0007669"/>
    <property type="project" value="UniProtKB-ARBA"/>
</dbReference>
<dbReference type="GO" id="GO:0008840">
    <property type="term" value="F:4-hydroxy-tetrahydrodipicolinate synthase activity"/>
    <property type="evidence" value="ECO:0007669"/>
    <property type="project" value="UniProtKB-UniRule"/>
</dbReference>
<dbReference type="GO" id="GO:0019877">
    <property type="term" value="P:diaminopimelate biosynthetic process"/>
    <property type="evidence" value="ECO:0007669"/>
    <property type="project" value="UniProtKB-UniRule"/>
</dbReference>
<dbReference type="GO" id="GO:0009089">
    <property type="term" value="P:lysine biosynthetic process via diaminopimelate"/>
    <property type="evidence" value="ECO:0007669"/>
    <property type="project" value="UniProtKB-UniRule"/>
</dbReference>
<dbReference type="CDD" id="cd00950">
    <property type="entry name" value="DHDPS"/>
    <property type="match status" value="1"/>
</dbReference>
<dbReference type="Gene3D" id="3.20.20.70">
    <property type="entry name" value="Aldolase class I"/>
    <property type="match status" value="1"/>
</dbReference>
<dbReference type="HAMAP" id="MF_00418">
    <property type="entry name" value="DapA"/>
    <property type="match status" value="1"/>
</dbReference>
<dbReference type="InterPro" id="IPR013785">
    <property type="entry name" value="Aldolase_TIM"/>
</dbReference>
<dbReference type="InterPro" id="IPR005263">
    <property type="entry name" value="DapA"/>
</dbReference>
<dbReference type="InterPro" id="IPR002220">
    <property type="entry name" value="DapA-like"/>
</dbReference>
<dbReference type="InterPro" id="IPR020625">
    <property type="entry name" value="Schiff_base-form_aldolases_AS"/>
</dbReference>
<dbReference type="InterPro" id="IPR020624">
    <property type="entry name" value="Schiff_base-form_aldolases_CS"/>
</dbReference>
<dbReference type="NCBIfam" id="TIGR00674">
    <property type="entry name" value="dapA"/>
    <property type="match status" value="1"/>
</dbReference>
<dbReference type="PANTHER" id="PTHR12128:SF66">
    <property type="entry name" value="4-HYDROXY-2-OXOGLUTARATE ALDOLASE, MITOCHONDRIAL"/>
    <property type="match status" value="1"/>
</dbReference>
<dbReference type="PANTHER" id="PTHR12128">
    <property type="entry name" value="DIHYDRODIPICOLINATE SYNTHASE"/>
    <property type="match status" value="1"/>
</dbReference>
<dbReference type="Pfam" id="PF00701">
    <property type="entry name" value="DHDPS"/>
    <property type="match status" value="1"/>
</dbReference>
<dbReference type="PIRSF" id="PIRSF001365">
    <property type="entry name" value="DHDPS"/>
    <property type="match status" value="1"/>
</dbReference>
<dbReference type="PRINTS" id="PR00146">
    <property type="entry name" value="DHPICSNTHASE"/>
</dbReference>
<dbReference type="SMART" id="SM01130">
    <property type="entry name" value="DHDPS"/>
    <property type="match status" value="1"/>
</dbReference>
<dbReference type="SUPFAM" id="SSF51569">
    <property type="entry name" value="Aldolase"/>
    <property type="match status" value="1"/>
</dbReference>
<dbReference type="PROSITE" id="PS00665">
    <property type="entry name" value="DHDPS_1"/>
    <property type="match status" value="1"/>
</dbReference>
<dbReference type="PROSITE" id="PS00666">
    <property type="entry name" value="DHDPS_2"/>
    <property type="match status" value="1"/>
</dbReference>
<protein>
    <recommendedName>
        <fullName evidence="1">4-hydroxy-tetrahydrodipicolinate synthase</fullName>
        <shortName evidence="1">HTPA synthase</shortName>
        <ecNumber evidence="1">4.3.3.7</ecNumber>
    </recommendedName>
</protein>
<proteinExistence type="inferred from homology"/>
<evidence type="ECO:0000255" key="1">
    <source>
        <dbReference type="HAMAP-Rule" id="MF_00418"/>
    </source>
</evidence>
<evidence type="ECO:0000305" key="2"/>
<feature type="chain" id="PRO_1000050224" description="4-hydroxy-tetrahydrodipicolinate synthase">
    <location>
        <begin position="1"/>
        <end position="295"/>
    </location>
</feature>
<feature type="active site" description="Proton donor/acceptor" evidence="1">
    <location>
        <position position="131"/>
    </location>
</feature>
<feature type="active site" description="Schiff-base intermediate with substrate" evidence="1">
    <location>
        <position position="159"/>
    </location>
</feature>
<feature type="binding site" evidence="1">
    <location>
        <position position="45"/>
    </location>
    <ligand>
        <name>pyruvate</name>
        <dbReference type="ChEBI" id="CHEBI:15361"/>
    </ligand>
</feature>
<feature type="binding site" evidence="1">
    <location>
        <position position="202"/>
    </location>
    <ligand>
        <name>pyruvate</name>
        <dbReference type="ChEBI" id="CHEBI:15361"/>
    </ligand>
</feature>
<feature type="site" description="Part of a proton relay during catalysis" evidence="1">
    <location>
        <position position="44"/>
    </location>
</feature>
<feature type="site" description="Part of a proton relay during catalysis" evidence="1">
    <location>
        <position position="105"/>
    </location>
</feature>
<reference key="1">
    <citation type="submission" date="2006-10" db="EMBL/GenBank/DDBJ databases">
        <title>Complete sequence of Methanosaeta thermophila PT.</title>
        <authorList>
            <consortium name="US DOE Joint Genome Institute"/>
            <person name="Copeland A."/>
            <person name="Lucas S."/>
            <person name="Lapidus A."/>
            <person name="Barry K."/>
            <person name="Detter J.C."/>
            <person name="Glavina del Rio T."/>
            <person name="Hammon N."/>
            <person name="Israni S."/>
            <person name="Pitluck S."/>
            <person name="Chain P."/>
            <person name="Malfatti S."/>
            <person name="Shin M."/>
            <person name="Vergez L."/>
            <person name="Schmutz J."/>
            <person name="Larimer F."/>
            <person name="Land M."/>
            <person name="Hauser L."/>
            <person name="Kyrpides N."/>
            <person name="Kim E."/>
            <person name="Smith K.S."/>
            <person name="Ingram-Smith C."/>
            <person name="Richardson P."/>
        </authorList>
    </citation>
    <scope>NUCLEOTIDE SEQUENCE [LARGE SCALE GENOMIC DNA]</scope>
    <source>
        <strain>DSM 6194 / JCM 14653 / NBRC 101360 / PT</strain>
    </source>
</reference>